<gene>
    <name evidence="1" type="primary">hslO</name>
    <name type="ordered locus">PSHAa0229</name>
</gene>
<feature type="chain" id="PRO_0000238082" description="33 kDa chaperonin">
    <location>
        <begin position="1"/>
        <end position="281"/>
    </location>
</feature>
<feature type="disulfide bond" description="Redox-active" evidence="1">
    <location>
        <begin position="229"/>
        <end position="231"/>
    </location>
</feature>
<feature type="disulfide bond" description="Redox-active" evidence="1">
    <location>
        <begin position="262"/>
        <end position="265"/>
    </location>
</feature>
<accession>Q3ILP2</accession>
<reference key="1">
    <citation type="journal article" date="2005" name="Genome Res.">
        <title>Coping with cold: the genome of the versatile marine Antarctica bacterium Pseudoalteromonas haloplanktis TAC125.</title>
        <authorList>
            <person name="Medigue C."/>
            <person name="Krin E."/>
            <person name="Pascal G."/>
            <person name="Barbe V."/>
            <person name="Bernsel A."/>
            <person name="Bertin P.N."/>
            <person name="Cheung F."/>
            <person name="Cruveiller S."/>
            <person name="D'Amico S."/>
            <person name="Duilio A."/>
            <person name="Fang G."/>
            <person name="Feller G."/>
            <person name="Ho C."/>
            <person name="Mangenot S."/>
            <person name="Marino G."/>
            <person name="Nilsson J."/>
            <person name="Parrilli E."/>
            <person name="Rocha E.P.C."/>
            <person name="Rouy Z."/>
            <person name="Sekowska A."/>
            <person name="Tutino M.L."/>
            <person name="Vallenet D."/>
            <person name="von Heijne G."/>
            <person name="Danchin A."/>
        </authorList>
    </citation>
    <scope>NUCLEOTIDE SEQUENCE [LARGE SCALE GENOMIC DNA]</scope>
    <source>
        <strain>TAC 125</strain>
    </source>
</reference>
<keyword id="KW-0143">Chaperone</keyword>
<keyword id="KW-0963">Cytoplasm</keyword>
<keyword id="KW-1015">Disulfide bond</keyword>
<keyword id="KW-0676">Redox-active center</keyword>
<keyword id="KW-1185">Reference proteome</keyword>
<keyword id="KW-0862">Zinc</keyword>
<comment type="function">
    <text evidence="1">Redox regulated molecular chaperone. Protects both thermally unfolding and oxidatively damaged proteins from irreversible aggregation. Plays an important role in the bacterial defense system toward oxidative stress.</text>
</comment>
<comment type="subcellular location">
    <subcellularLocation>
        <location evidence="1">Cytoplasm</location>
    </subcellularLocation>
</comment>
<comment type="PTM">
    <text evidence="1">Under oxidizing conditions two disulfide bonds are formed involving the reactive cysteines. Under reducing conditions zinc is bound to the reactive cysteines and the protein is inactive.</text>
</comment>
<comment type="similarity">
    <text evidence="1">Belongs to the HSP33 family.</text>
</comment>
<protein>
    <recommendedName>
        <fullName evidence="1">33 kDa chaperonin</fullName>
    </recommendedName>
    <alternativeName>
        <fullName evidence="1">Heat shock protein 33 homolog</fullName>
        <shortName evidence="1">HSP33</shortName>
    </alternativeName>
</protein>
<sequence>MQQDLLHRYLFDNLDVRGELVQIENAYNEMIANHNYPDAVKALLGELLVATCLLTATLKFEGEIAVQLQGDGPVKYAVINGDDKQNMRGIARLQSEVTGSTVKELIGQGYMVITITPTKGERYQGIVPLEHETLSECIEAYFEQSEQLKTRLWFATDTTEGNAKACGLFLQVLPVDKQKSIEDFAHLEALSHTIKDEELLELDANTVLTRLYHEDNPRVFEPQSIQFKCGCTREKTMTALVNIGQQALLDDVAEHGEIKISCHYCLKDYLFDEQDVKNIFN</sequence>
<dbReference type="EMBL" id="CR954246">
    <property type="protein sequence ID" value="CAI85332.1"/>
    <property type="molecule type" value="Genomic_DNA"/>
</dbReference>
<dbReference type="SMR" id="Q3ILP2"/>
<dbReference type="STRING" id="326442.PSHAa0229"/>
<dbReference type="KEGG" id="pha:PSHAa0229"/>
<dbReference type="PATRIC" id="fig|326442.8.peg.220"/>
<dbReference type="eggNOG" id="COG1281">
    <property type="taxonomic scope" value="Bacteria"/>
</dbReference>
<dbReference type="HOGENOM" id="CLU_054493_0_0_6"/>
<dbReference type="BioCyc" id="PHAL326442:PSHA_RS01130-MONOMER"/>
<dbReference type="Proteomes" id="UP000006843">
    <property type="component" value="Chromosome I"/>
</dbReference>
<dbReference type="GO" id="GO:0005737">
    <property type="term" value="C:cytoplasm"/>
    <property type="evidence" value="ECO:0007669"/>
    <property type="project" value="UniProtKB-SubCell"/>
</dbReference>
<dbReference type="GO" id="GO:0044183">
    <property type="term" value="F:protein folding chaperone"/>
    <property type="evidence" value="ECO:0007669"/>
    <property type="project" value="TreeGrafter"/>
</dbReference>
<dbReference type="GO" id="GO:0051082">
    <property type="term" value="F:unfolded protein binding"/>
    <property type="evidence" value="ECO:0007669"/>
    <property type="project" value="UniProtKB-UniRule"/>
</dbReference>
<dbReference type="GO" id="GO:0042026">
    <property type="term" value="P:protein refolding"/>
    <property type="evidence" value="ECO:0007669"/>
    <property type="project" value="TreeGrafter"/>
</dbReference>
<dbReference type="CDD" id="cd00498">
    <property type="entry name" value="Hsp33"/>
    <property type="match status" value="1"/>
</dbReference>
<dbReference type="Gene3D" id="1.10.287.480">
    <property type="entry name" value="helix hairpin bin"/>
    <property type="match status" value="1"/>
</dbReference>
<dbReference type="Gene3D" id="3.55.30.10">
    <property type="entry name" value="Hsp33 domain"/>
    <property type="match status" value="1"/>
</dbReference>
<dbReference type="Gene3D" id="3.90.1280.10">
    <property type="entry name" value="HSP33 redox switch-like"/>
    <property type="match status" value="1"/>
</dbReference>
<dbReference type="HAMAP" id="MF_00117">
    <property type="entry name" value="HslO"/>
    <property type="match status" value="1"/>
</dbReference>
<dbReference type="InterPro" id="IPR000397">
    <property type="entry name" value="Heat_shock_Hsp33"/>
</dbReference>
<dbReference type="InterPro" id="IPR016154">
    <property type="entry name" value="Heat_shock_Hsp33_C"/>
</dbReference>
<dbReference type="InterPro" id="IPR016153">
    <property type="entry name" value="Heat_shock_Hsp33_N"/>
</dbReference>
<dbReference type="InterPro" id="IPR023212">
    <property type="entry name" value="Hsp33_helix_hairpin_bin_dom_sf"/>
</dbReference>
<dbReference type="NCBIfam" id="NF001033">
    <property type="entry name" value="PRK00114.1"/>
    <property type="match status" value="1"/>
</dbReference>
<dbReference type="PANTHER" id="PTHR30111">
    <property type="entry name" value="33 KDA CHAPERONIN"/>
    <property type="match status" value="1"/>
</dbReference>
<dbReference type="PANTHER" id="PTHR30111:SF1">
    <property type="entry name" value="33 KDA CHAPERONIN"/>
    <property type="match status" value="1"/>
</dbReference>
<dbReference type="Pfam" id="PF01430">
    <property type="entry name" value="HSP33"/>
    <property type="match status" value="1"/>
</dbReference>
<dbReference type="PIRSF" id="PIRSF005261">
    <property type="entry name" value="Heat_shock_Hsp33"/>
    <property type="match status" value="1"/>
</dbReference>
<dbReference type="SUPFAM" id="SSF64397">
    <property type="entry name" value="Hsp33 domain"/>
    <property type="match status" value="1"/>
</dbReference>
<dbReference type="SUPFAM" id="SSF118352">
    <property type="entry name" value="HSP33 redox switch-like"/>
    <property type="match status" value="1"/>
</dbReference>
<organism>
    <name type="scientific">Pseudoalteromonas translucida (strain TAC 125)</name>
    <dbReference type="NCBI Taxonomy" id="326442"/>
    <lineage>
        <taxon>Bacteria</taxon>
        <taxon>Pseudomonadati</taxon>
        <taxon>Pseudomonadota</taxon>
        <taxon>Gammaproteobacteria</taxon>
        <taxon>Alteromonadales</taxon>
        <taxon>Pseudoalteromonadaceae</taxon>
        <taxon>Pseudoalteromonas</taxon>
    </lineage>
</organism>
<name>HSLO_PSET1</name>
<evidence type="ECO:0000255" key="1">
    <source>
        <dbReference type="HAMAP-Rule" id="MF_00117"/>
    </source>
</evidence>
<proteinExistence type="inferred from homology"/>